<evidence type="ECO:0000255" key="1">
    <source>
        <dbReference type="HAMAP-Rule" id="MF_01113"/>
    </source>
</evidence>
<organism>
    <name type="scientific">Pelotomaculum thermopropionicum (strain DSM 13744 / JCM 10971 / SI)</name>
    <dbReference type="NCBI Taxonomy" id="370438"/>
    <lineage>
        <taxon>Bacteria</taxon>
        <taxon>Bacillati</taxon>
        <taxon>Bacillota</taxon>
        <taxon>Clostridia</taxon>
        <taxon>Eubacteriales</taxon>
        <taxon>Desulfotomaculaceae</taxon>
        <taxon>Pelotomaculum</taxon>
    </lineage>
</organism>
<reference key="1">
    <citation type="journal article" date="2008" name="Genome Res.">
        <title>The genome of Pelotomaculum thermopropionicum reveals niche-associated evolution in anaerobic microbiota.</title>
        <authorList>
            <person name="Kosaka T."/>
            <person name="Kato S."/>
            <person name="Shimoyama T."/>
            <person name="Ishii S."/>
            <person name="Abe T."/>
            <person name="Watanabe K."/>
        </authorList>
    </citation>
    <scope>NUCLEOTIDE SEQUENCE [LARGE SCALE GENOMIC DNA]</scope>
    <source>
        <strain>DSM 13744 / JCM 10971 / SI</strain>
    </source>
</reference>
<feature type="chain" id="PRO_1000084906" description="DNA polymerase IV">
    <location>
        <begin position="1"/>
        <end position="402"/>
    </location>
</feature>
<feature type="domain" description="UmuC" evidence="1">
    <location>
        <begin position="5"/>
        <end position="187"/>
    </location>
</feature>
<feature type="active site" evidence="1">
    <location>
        <position position="106"/>
    </location>
</feature>
<feature type="binding site" evidence="1">
    <location>
        <position position="9"/>
    </location>
    <ligand>
        <name>Mg(2+)</name>
        <dbReference type="ChEBI" id="CHEBI:18420"/>
    </ligand>
</feature>
<feature type="binding site" evidence="1">
    <location>
        <position position="105"/>
    </location>
    <ligand>
        <name>Mg(2+)</name>
        <dbReference type="ChEBI" id="CHEBI:18420"/>
    </ligand>
</feature>
<feature type="site" description="Substrate discrimination" evidence="1">
    <location>
        <position position="14"/>
    </location>
</feature>
<protein>
    <recommendedName>
        <fullName evidence="1">DNA polymerase IV</fullName>
        <shortName evidence="1">Pol IV</shortName>
        <ecNumber evidence="1">2.7.7.7</ecNumber>
    </recommendedName>
</protein>
<keyword id="KW-0963">Cytoplasm</keyword>
<keyword id="KW-0227">DNA damage</keyword>
<keyword id="KW-0234">DNA repair</keyword>
<keyword id="KW-0235">DNA replication</keyword>
<keyword id="KW-0238">DNA-binding</keyword>
<keyword id="KW-0239">DNA-directed DNA polymerase</keyword>
<keyword id="KW-0460">Magnesium</keyword>
<keyword id="KW-0479">Metal-binding</keyword>
<keyword id="KW-0515">Mutator protein</keyword>
<keyword id="KW-0548">Nucleotidyltransferase</keyword>
<keyword id="KW-1185">Reference proteome</keyword>
<keyword id="KW-0808">Transferase</keyword>
<dbReference type="EC" id="2.7.7.7" evidence="1"/>
<dbReference type="EMBL" id="AP009389">
    <property type="protein sequence ID" value="BAF59679.1"/>
    <property type="molecule type" value="Genomic_DNA"/>
</dbReference>
<dbReference type="SMR" id="A5D243"/>
<dbReference type="STRING" id="370438.PTH_1498"/>
<dbReference type="KEGG" id="pth:PTH_1498"/>
<dbReference type="eggNOG" id="COG0389">
    <property type="taxonomic scope" value="Bacteria"/>
</dbReference>
<dbReference type="HOGENOM" id="CLU_012348_1_1_9"/>
<dbReference type="Proteomes" id="UP000006556">
    <property type="component" value="Chromosome"/>
</dbReference>
<dbReference type="GO" id="GO:0005829">
    <property type="term" value="C:cytosol"/>
    <property type="evidence" value="ECO:0007669"/>
    <property type="project" value="TreeGrafter"/>
</dbReference>
<dbReference type="GO" id="GO:0003684">
    <property type="term" value="F:damaged DNA binding"/>
    <property type="evidence" value="ECO:0007669"/>
    <property type="project" value="InterPro"/>
</dbReference>
<dbReference type="GO" id="GO:0003887">
    <property type="term" value="F:DNA-directed DNA polymerase activity"/>
    <property type="evidence" value="ECO:0007669"/>
    <property type="project" value="UniProtKB-UniRule"/>
</dbReference>
<dbReference type="GO" id="GO:0000287">
    <property type="term" value="F:magnesium ion binding"/>
    <property type="evidence" value="ECO:0007669"/>
    <property type="project" value="UniProtKB-UniRule"/>
</dbReference>
<dbReference type="GO" id="GO:0006261">
    <property type="term" value="P:DNA-templated DNA replication"/>
    <property type="evidence" value="ECO:0007669"/>
    <property type="project" value="UniProtKB-UniRule"/>
</dbReference>
<dbReference type="GO" id="GO:0042276">
    <property type="term" value="P:error-prone translesion synthesis"/>
    <property type="evidence" value="ECO:0007669"/>
    <property type="project" value="TreeGrafter"/>
</dbReference>
<dbReference type="GO" id="GO:0009432">
    <property type="term" value="P:SOS response"/>
    <property type="evidence" value="ECO:0007669"/>
    <property type="project" value="TreeGrafter"/>
</dbReference>
<dbReference type="CDD" id="cd03586">
    <property type="entry name" value="PolY_Pol_IV_kappa"/>
    <property type="match status" value="1"/>
</dbReference>
<dbReference type="Gene3D" id="3.30.70.270">
    <property type="match status" value="1"/>
</dbReference>
<dbReference type="Gene3D" id="3.40.1170.60">
    <property type="match status" value="1"/>
</dbReference>
<dbReference type="Gene3D" id="1.10.150.20">
    <property type="entry name" value="5' to 3' exonuclease, C-terminal subdomain"/>
    <property type="match status" value="1"/>
</dbReference>
<dbReference type="Gene3D" id="3.30.1490.100">
    <property type="entry name" value="DNA polymerase, Y-family, little finger domain"/>
    <property type="match status" value="1"/>
</dbReference>
<dbReference type="HAMAP" id="MF_01113">
    <property type="entry name" value="DNApol_IV"/>
    <property type="match status" value="1"/>
</dbReference>
<dbReference type="InterPro" id="IPR043502">
    <property type="entry name" value="DNA/RNA_pol_sf"/>
</dbReference>
<dbReference type="InterPro" id="IPR036775">
    <property type="entry name" value="DNA_pol_Y-fam_lit_finger_sf"/>
</dbReference>
<dbReference type="InterPro" id="IPR017961">
    <property type="entry name" value="DNA_pol_Y-fam_little_finger"/>
</dbReference>
<dbReference type="InterPro" id="IPR050116">
    <property type="entry name" value="DNA_polymerase-Y"/>
</dbReference>
<dbReference type="InterPro" id="IPR022880">
    <property type="entry name" value="DNApol_IV"/>
</dbReference>
<dbReference type="InterPro" id="IPR053848">
    <property type="entry name" value="IMS_HHH_1"/>
</dbReference>
<dbReference type="InterPro" id="IPR043128">
    <property type="entry name" value="Rev_trsase/Diguanyl_cyclase"/>
</dbReference>
<dbReference type="InterPro" id="IPR001126">
    <property type="entry name" value="UmuC"/>
</dbReference>
<dbReference type="NCBIfam" id="NF002677">
    <property type="entry name" value="PRK02406.1"/>
    <property type="match status" value="1"/>
</dbReference>
<dbReference type="NCBIfam" id="NF002848">
    <property type="entry name" value="PRK03103.1"/>
    <property type="match status" value="1"/>
</dbReference>
<dbReference type="PANTHER" id="PTHR11076">
    <property type="entry name" value="DNA REPAIR POLYMERASE UMUC / TRANSFERASE FAMILY MEMBER"/>
    <property type="match status" value="1"/>
</dbReference>
<dbReference type="PANTHER" id="PTHR11076:SF35">
    <property type="entry name" value="DNA REPAIR PROTEIN HOMOLOG YOBH"/>
    <property type="match status" value="1"/>
</dbReference>
<dbReference type="Pfam" id="PF00817">
    <property type="entry name" value="IMS"/>
    <property type="match status" value="1"/>
</dbReference>
<dbReference type="Pfam" id="PF11799">
    <property type="entry name" value="IMS_C"/>
    <property type="match status" value="1"/>
</dbReference>
<dbReference type="Pfam" id="PF21999">
    <property type="entry name" value="IMS_HHH_1"/>
    <property type="match status" value="1"/>
</dbReference>
<dbReference type="SUPFAM" id="SSF56672">
    <property type="entry name" value="DNA/RNA polymerases"/>
    <property type="match status" value="1"/>
</dbReference>
<dbReference type="SUPFAM" id="SSF100879">
    <property type="entry name" value="Lesion bypass DNA polymerase (Y-family), little finger domain"/>
    <property type="match status" value="1"/>
</dbReference>
<dbReference type="PROSITE" id="PS50173">
    <property type="entry name" value="UMUC"/>
    <property type="match status" value="1"/>
</dbReference>
<proteinExistence type="inferred from homology"/>
<sequence length="402" mass="44514">MRCPILLADMNSFYASVHQAMEPRLKGKPVIVGGDPARRHGIVLAASVEAKACGVKTGMTVREAAALCPQGIFLKPRHSHYINFSARIIRIMKDFSPLVEPFSIDEAFMDVSGCGLLFGSSLEIAVKLKARIKNEVGVLCSVGVGPNKLLAKMAAGMQKPDGLTLLDFPDVPVKIWPLPVRELFGVGSRLEKRLRDLNIHTIGDLARYPLQVLKQKFGLVGHILHLSASGIDYSPVDPCSLERVRSIGHQITLPRDYWGYNEIKVVILELCEIVCRRVRLGGYAGRTVSLTLKDTDFLWLSRARTMNYPTASADEVYRVAVQLLHQHWPPWKPVRMVGVSLAGLVKNRAEQLDLFGEAERARRLHAACDRIKDRFGEHSILRAVSLTPAGVLRERGGEAKHG</sequence>
<name>DPO4_PELTS</name>
<accession>A5D243</accession>
<gene>
    <name evidence="1" type="primary">dinB</name>
    <name type="ordered locus">PTH_1498</name>
</gene>
<comment type="function">
    <text evidence="1">Poorly processive, error-prone DNA polymerase involved in untargeted mutagenesis. Copies undamaged DNA at stalled replication forks, which arise in vivo from mismatched or misaligned primer ends. These misaligned primers can be extended by PolIV. Exhibits no 3'-5' exonuclease (proofreading) activity. May be involved in translesional synthesis, in conjunction with the beta clamp from PolIII.</text>
</comment>
<comment type="catalytic activity">
    <reaction evidence="1">
        <text>DNA(n) + a 2'-deoxyribonucleoside 5'-triphosphate = DNA(n+1) + diphosphate</text>
        <dbReference type="Rhea" id="RHEA:22508"/>
        <dbReference type="Rhea" id="RHEA-COMP:17339"/>
        <dbReference type="Rhea" id="RHEA-COMP:17340"/>
        <dbReference type="ChEBI" id="CHEBI:33019"/>
        <dbReference type="ChEBI" id="CHEBI:61560"/>
        <dbReference type="ChEBI" id="CHEBI:173112"/>
        <dbReference type="EC" id="2.7.7.7"/>
    </reaction>
</comment>
<comment type="cofactor">
    <cofactor evidence="1">
        <name>Mg(2+)</name>
        <dbReference type="ChEBI" id="CHEBI:18420"/>
    </cofactor>
    <text evidence="1">Binds 2 magnesium ions per subunit.</text>
</comment>
<comment type="subunit">
    <text evidence="1">Monomer.</text>
</comment>
<comment type="subcellular location">
    <subcellularLocation>
        <location evidence="1">Cytoplasm</location>
    </subcellularLocation>
</comment>
<comment type="similarity">
    <text evidence="1">Belongs to the DNA polymerase type-Y family.</text>
</comment>